<accession>O80807</accession>
<evidence type="ECO:0000255" key="1"/>
<evidence type="ECO:0000255" key="2">
    <source>
        <dbReference type="PROSITE-ProRule" id="PRU00251"/>
    </source>
</evidence>
<evidence type="ECO:0000256" key="3">
    <source>
        <dbReference type="SAM" id="MobiDB-lite"/>
    </source>
</evidence>
<evidence type="ECO:0000269" key="4">
    <source>
    </source>
</evidence>
<evidence type="ECO:0000303" key="5">
    <source>
    </source>
</evidence>
<evidence type="ECO:0000305" key="6"/>
<evidence type="ECO:0000312" key="7">
    <source>
        <dbReference type="Araport" id="AT1G65360"/>
    </source>
</evidence>
<evidence type="ECO:0000312" key="8">
    <source>
        <dbReference type="EMBL" id="AAC27145.1"/>
    </source>
</evidence>
<proteinExistence type="evidence at transcript level"/>
<dbReference type="EMBL" id="AC004512">
    <property type="protein sequence ID" value="AAC27145.1"/>
    <property type="molecule type" value="Genomic_DNA"/>
</dbReference>
<dbReference type="EMBL" id="CP002684">
    <property type="protein sequence ID" value="AEE34365.1"/>
    <property type="molecule type" value="Genomic_DNA"/>
</dbReference>
<dbReference type="EMBL" id="AY141230">
    <property type="protein sequence ID" value="AAN52794.1"/>
    <property type="molecule type" value="mRNA"/>
</dbReference>
<dbReference type="PIR" id="T02359">
    <property type="entry name" value="T02359"/>
</dbReference>
<dbReference type="RefSeq" id="NP_176715.1">
    <property type="nucleotide sequence ID" value="NM_105210.2"/>
</dbReference>
<dbReference type="SMR" id="O80807"/>
<dbReference type="FunCoup" id="O80807">
    <property type="interactions" value="15"/>
</dbReference>
<dbReference type="IntAct" id="O80807">
    <property type="interactions" value="13"/>
</dbReference>
<dbReference type="STRING" id="3702.O80807"/>
<dbReference type="PaxDb" id="3702-AT1G65360.1"/>
<dbReference type="EnsemblPlants" id="AT1G65360.1">
    <property type="protein sequence ID" value="AT1G65360.1"/>
    <property type="gene ID" value="AT1G65360"/>
</dbReference>
<dbReference type="GeneID" id="842846"/>
<dbReference type="Gramene" id="AT1G65360.1">
    <property type="protein sequence ID" value="AT1G65360.1"/>
    <property type="gene ID" value="AT1G65360"/>
</dbReference>
<dbReference type="KEGG" id="ath:AT1G65360"/>
<dbReference type="Araport" id="AT1G65360"/>
<dbReference type="TAIR" id="AT1G65360">
    <property type="gene designation" value="AGL23"/>
</dbReference>
<dbReference type="eggNOG" id="KOG0014">
    <property type="taxonomic scope" value="Eukaryota"/>
</dbReference>
<dbReference type="HOGENOM" id="CLU_053053_5_3_1"/>
<dbReference type="InParanoid" id="O80807"/>
<dbReference type="OMA" id="IMANDVM"/>
<dbReference type="PhylomeDB" id="O80807"/>
<dbReference type="PRO" id="PR:O80807"/>
<dbReference type="Proteomes" id="UP000006548">
    <property type="component" value="Chromosome 1"/>
</dbReference>
<dbReference type="ExpressionAtlas" id="O80807">
    <property type="expression patterns" value="baseline and differential"/>
</dbReference>
<dbReference type="GO" id="GO:0005634">
    <property type="term" value="C:nucleus"/>
    <property type="evidence" value="ECO:0007669"/>
    <property type="project" value="UniProtKB-SubCell"/>
</dbReference>
<dbReference type="GO" id="GO:0003677">
    <property type="term" value="F:DNA binding"/>
    <property type="evidence" value="ECO:0007669"/>
    <property type="project" value="UniProtKB-KW"/>
</dbReference>
<dbReference type="GO" id="GO:0003700">
    <property type="term" value="F:DNA-binding transcription factor activity"/>
    <property type="evidence" value="ECO:0000250"/>
    <property type="project" value="TAIR"/>
</dbReference>
<dbReference type="GO" id="GO:0046983">
    <property type="term" value="F:protein dimerization activity"/>
    <property type="evidence" value="ECO:0007669"/>
    <property type="project" value="InterPro"/>
</dbReference>
<dbReference type="GO" id="GO:0009658">
    <property type="term" value="P:chloroplast organization"/>
    <property type="evidence" value="ECO:0000315"/>
    <property type="project" value="TAIR"/>
</dbReference>
<dbReference type="GO" id="GO:0009553">
    <property type="term" value="P:embryo sac development"/>
    <property type="evidence" value="ECO:0000315"/>
    <property type="project" value="TAIR"/>
</dbReference>
<dbReference type="FunFam" id="3.40.1810.10:FF:000006">
    <property type="entry name" value="Agamous-like MADS-box protein AGL62"/>
    <property type="match status" value="1"/>
</dbReference>
<dbReference type="Gene3D" id="3.40.1810.10">
    <property type="entry name" value="Transcription factor, MADS-box"/>
    <property type="match status" value="1"/>
</dbReference>
<dbReference type="InterPro" id="IPR002100">
    <property type="entry name" value="TF_MADSbox"/>
</dbReference>
<dbReference type="InterPro" id="IPR036879">
    <property type="entry name" value="TF_MADSbox_sf"/>
</dbReference>
<dbReference type="PANTHER" id="PTHR11945:SF776">
    <property type="entry name" value="AGAMOUS-LIKE 50-RELATED"/>
    <property type="match status" value="1"/>
</dbReference>
<dbReference type="PANTHER" id="PTHR11945">
    <property type="entry name" value="MADS BOX PROTEIN"/>
    <property type="match status" value="1"/>
</dbReference>
<dbReference type="Pfam" id="PF00319">
    <property type="entry name" value="SRF-TF"/>
    <property type="match status" value="1"/>
</dbReference>
<dbReference type="PRINTS" id="PR00404">
    <property type="entry name" value="MADSDOMAIN"/>
</dbReference>
<dbReference type="SMART" id="SM00432">
    <property type="entry name" value="MADS"/>
    <property type="match status" value="1"/>
</dbReference>
<dbReference type="SUPFAM" id="SSF55455">
    <property type="entry name" value="SRF-like"/>
    <property type="match status" value="1"/>
</dbReference>
<dbReference type="PROSITE" id="PS50066">
    <property type="entry name" value="MADS_BOX_2"/>
    <property type="match status" value="1"/>
</dbReference>
<protein>
    <recommendedName>
        <fullName evidence="6">Agamous-like MADS-box protein AGL23</fullName>
    </recommendedName>
</protein>
<gene>
    <name evidence="5" type="primary">AGL23</name>
    <name evidence="7" type="ordered locus">At1g65360</name>
    <name evidence="8" type="ORF">T8F5.14</name>
</gene>
<organism>
    <name type="scientific">Arabidopsis thaliana</name>
    <name type="common">Mouse-ear cress</name>
    <dbReference type="NCBI Taxonomy" id="3702"/>
    <lineage>
        <taxon>Eukaryota</taxon>
        <taxon>Viridiplantae</taxon>
        <taxon>Streptophyta</taxon>
        <taxon>Embryophyta</taxon>
        <taxon>Tracheophyta</taxon>
        <taxon>Spermatophyta</taxon>
        <taxon>Magnoliopsida</taxon>
        <taxon>eudicotyledons</taxon>
        <taxon>Gunneridae</taxon>
        <taxon>Pentapetalae</taxon>
        <taxon>rosids</taxon>
        <taxon>malvids</taxon>
        <taxon>Brassicales</taxon>
        <taxon>Brassicaceae</taxon>
        <taxon>Camelineae</taxon>
        <taxon>Arabidopsis</taxon>
    </lineage>
</organism>
<name>AGL23_ARATH</name>
<reference key="1">
    <citation type="journal article" date="2000" name="Nature">
        <title>Sequence and analysis of chromosome 1 of the plant Arabidopsis thaliana.</title>
        <authorList>
            <person name="Theologis A."/>
            <person name="Ecker J.R."/>
            <person name="Palm C.J."/>
            <person name="Federspiel N.A."/>
            <person name="Kaul S."/>
            <person name="White O."/>
            <person name="Alonso J."/>
            <person name="Altafi H."/>
            <person name="Araujo R."/>
            <person name="Bowman C.L."/>
            <person name="Brooks S.Y."/>
            <person name="Buehler E."/>
            <person name="Chan A."/>
            <person name="Chao Q."/>
            <person name="Chen H."/>
            <person name="Cheuk R.F."/>
            <person name="Chin C.W."/>
            <person name="Chung M.K."/>
            <person name="Conn L."/>
            <person name="Conway A.B."/>
            <person name="Conway A.R."/>
            <person name="Creasy T.H."/>
            <person name="Dewar K."/>
            <person name="Dunn P."/>
            <person name="Etgu P."/>
            <person name="Feldblyum T.V."/>
            <person name="Feng J.-D."/>
            <person name="Fong B."/>
            <person name="Fujii C.Y."/>
            <person name="Gill J.E."/>
            <person name="Goldsmith A.D."/>
            <person name="Haas B."/>
            <person name="Hansen N.F."/>
            <person name="Hughes B."/>
            <person name="Huizar L."/>
            <person name="Hunter J.L."/>
            <person name="Jenkins J."/>
            <person name="Johnson-Hopson C."/>
            <person name="Khan S."/>
            <person name="Khaykin E."/>
            <person name="Kim C.J."/>
            <person name="Koo H.L."/>
            <person name="Kremenetskaia I."/>
            <person name="Kurtz D.B."/>
            <person name="Kwan A."/>
            <person name="Lam B."/>
            <person name="Langin-Hooper S."/>
            <person name="Lee A."/>
            <person name="Lee J.M."/>
            <person name="Lenz C.A."/>
            <person name="Li J.H."/>
            <person name="Li Y.-P."/>
            <person name="Lin X."/>
            <person name="Liu S.X."/>
            <person name="Liu Z.A."/>
            <person name="Luros J.S."/>
            <person name="Maiti R."/>
            <person name="Marziali A."/>
            <person name="Militscher J."/>
            <person name="Miranda M."/>
            <person name="Nguyen M."/>
            <person name="Nierman W.C."/>
            <person name="Osborne B.I."/>
            <person name="Pai G."/>
            <person name="Peterson J."/>
            <person name="Pham P.K."/>
            <person name="Rizzo M."/>
            <person name="Rooney T."/>
            <person name="Rowley D."/>
            <person name="Sakano H."/>
            <person name="Salzberg S.L."/>
            <person name="Schwartz J.R."/>
            <person name="Shinn P."/>
            <person name="Southwick A.M."/>
            <person name="Sun H."/>
            <person name="Tallon L.J."/>
            <person name="Tambunga G."/>
            <person name="Toriumi M.J."/>
            <person name="Town C.D."/>
            <person name="Utterback T."/>
            <person name="Van Aken S."/>
            <person name="Vaysberg M."/>
            <person name="Vysotskaia V.S."/>
            <person name="Walker M."/>
            <person name="Wu D."/>
            <person name="Yu G."/>
            <person name="Fraser C.M."/>
            <person name="Venter J.C."/>
            <person name="Davis R.W."/>
        </authorList>
    </citation>
    <scope>NUCLEOTIDE SEQUENCE [LARGE SCALE GENOMIC DNA]</scope>
    <source>
        <strain>cv. Columbia</strain>
    </source>
</reference>
<reference key="2">
    <citation type="journal article" date="2017" name="Plant J.">
        <title>Araport11: a complete reannotation of the Arabidopsis thaliana reference genome.</title>
        <authorList>
            <person name="Cheng C.Y."/>
            <person name="Krishnakumar V."/>
            <person name="Chan A.P."/>
            <person name="Thibaud-Nissen F."/>
            <person name="Schobel S."/>
            <person name="Town C.D."/>
        </authorList>
    </citation>
    <scope>GENOME REANNOTATION</scope>
    <source>
        <strain>cv. Columbia</strain>
    </source>
</reference>
<reference key="3">
    <citation type="journal article" date="2003" name="Science">
        <title>Empirical analysis of transcriptional activity in the Arabidopsis genome.</title>
        <authorList>
            <person name="Yamada K."/>
            <person name="Lim J."/>
            <person name="Dale J.M."/>
            <person name="Chen H."/>
            <person name="Shinn P."/>
            <person name="Palm C.J."/>
            <person name="Southwick A.M."/>
            <person name="Wu H.C."/>
            <person name="Kim C.J."/>
            <person name="Nguyen M."/>
            <person name="Pham P.K."/>
            <person name="Cheuk R.F."/>
            <person name="Karlin-Newmann G."/>
            <person name="Liu S.X."/>
            <person name="Lam B."/>
            <person name="Sakano H."/>
            <person name="Wu T."/>
            <person name="Yu G."/>
            <person name="Miranda M."/>
            <person name="Quach H.L."/>
            <person name="Tripp M."/>
            <person name="Chang C.H."/>
            <person name="Lee J.M."/>
            <person name="Toriumi M.J."/>
            <person name="Chan M.M."/>
            <person name="Tang C.C."/>
            <person name="Onodera C.S."/>
            <person name="Deng J.M."/>
            <person name="Akiyama K."/>
            <person name="Ansari Y."/>
            <person name="Arakawa T."/>
            <person name="Banh J."/>
            <person name="Banno F."/>
            <person name="Bowser L."/>
            <person name="Brooks S.Y."/>
            <person name="Carninci P."/>
            <person name="Chao Q."/>
            <person name="Choy N."/>
            <person name="Enju A."/>
            <person name="Goldsmith A.D."/>
            <person name="Gurjal M."/>
            <person name="Hansen N.F."/>
            <person name="Hayashizaki Y."/>
            <person name="Johnson-Hopson C."/>
            <person name="Hsuan V.W."/>
            <person name="Iida K."/>
            <person name="Karnes M."/>
            <person name="Khan S."/>
            <person name="Koesema E."/>
            <person name="Ishida J."/>
            <person name="Jiang P.X."/>
            <person name="Jones T."/>
            <person name="Kawai J."/>
            <person name="Kamiya A."/>
            <person name="Meyers C."/>
            <person name="Nakajima M."/>
            <person name="Narusaka M."/>
            <person name="Seki M."/>
            <person name="Sakurai T."/>
            <person name="Satou M."/>
            <person name="Tamse R."/>
            <person name="Vaysberg M."/>
            <person name="Wallender E.K."/>
            <person name="Wong C."/>
            <person name="Yamamura Y."/>
            <person name="Yuan S."/>
            <person name="Shinozaki K."/>
            <person name="Davis R.W."/>
            <person name="Theologis A."/>
            <person name="Ecker J.R."/>
        </authorList>
    </citation>
    <scope>NUCLEOTIDE SEQUENCE [LARGE SCALE MRNA]</scope>
    <source>
        <strain>cv. Columbia</strain>
    </source>
</reference>
<reference key="4">
    <citation type="journal article" date="2003" name="Plant Cell">
        <title>Molecular and phylogenetic analyses of the complete MADS-box transcription factor family in Arabidopsis: new openings to the MADS world.</title>
        <authorList>
            <person name="Parenicova L."/>
            <person name="de Folter S."/>
            <person name="Kieffer M."/>
            <person name="Horner D.S."/>
            <person name="Favalli C."/>
            <person name="Busscher J."/>
            <person name="Cook H.E."/>
            <person name="Ingram R.M."/>
            <person name="Kater M.M."/>
            <person name="Davies B."/>
            <person name="Angenent G.C."/>
            <person name="Colombo L."/>
        </authorList>
    </citation>
    <scope>GENE FAMILY</scope>
    <scope>NOMENCLATURE</scope>
</reference>
<reference key="5">
    <citation type="journal article" date="2008" name="Plant J.">
        <title>AGL23, a type I MADS-box gene that controls female gametophyte and embryo development in Arabidopsis.</title>
        <authorList>
            <person name="Colombo M."/>
            <person name="Masiero S."/>
            <person name="Vanzulli S."/>
            <person name="Lardelli P."/>
            <person name="Kater M.M."/>
            <person name="Colombo L."/>
        </authorList>
    </citation>
    <scope>FUNCTION</scope>
    <scope>DEVELOPMENTAL STAGE</scope>
    <scope>DISRUPTION PHENOTYPE</scope>
</reference>
<reference key="6">
    <citation type="journal article" date="2010" name="Plant Physiol.">
        <title>An atlas of type I MADS box gene expression during female gametophyte and seed development in Arabidopsis.</title>
        <authorList>
            <person name="Bemer M."/>
            <person name="Heijmans K."/>
            <person name="Airoldi C."/>
            <person name="Davies B."/>
            <person name="Angenent G.C."/>
        </authorList>
    </citation>
    <scope>DEVELOPMENTAL STAGE</scope>
</reference>
<comment type="function">
    <text evidence="4">Probable transcription factor that controls female gametophyte (megagametogenesis) development and chloroplast biogenesis during embryo development.</text>
</comment>
<comment type="subcellular location">
    <subcellularLocation>
        <location evidence="2">Nucleus</location>
    </subcellularLocation>
</comment>
<comment type="developmental stage">
    <text evidence="4">During embryo development, expressed in the functional megaspore until maturity of the embryo sac. After fertilization, expressed in the embryo and endosperm until the early torpedo stage. Not expressed in mature embryo.</text>
</comment>
<comment type="disruption phenotype">
    <text evidence="4">Embryonic lethality when homozygous.</text>
</comment>
<sequence>MVKKTLGRRKVEIVKMTKESNLQVTFSKRKAGLFKKASEFCTLCDAKIAMIVFSPAGKVFSFGHPNVDVLLDHFRGCVVGHNNTNLDESYTKLHVQMLNKSYTEVKAEVEKEQKNKQSRAQNERENENAEEWWSKSPLELNLSQSTCMIRVLKDLKKIVDEKAIQLIHQTNPNFYVGSSSNAAAPATVSGGNISTNQGFFDQNGMTTNPTQTLLFGFDIMNRTPGV</sequence>
<keyword id="KW-0175">Coiled coil</keyword>
<keyword id="KW-0238">DNA-binding</keyword>
<keyword id="KW-0539">Nucleus</keyword>
<keyword id="KW-1185">Reference proteome</keyword>
<keyword id="KW-0804">Transcription</keyword>
<keyword id="KW-0805">Transcription regulation</keyword>
<feature type="chain" id="PRO_0000433963" description="Agamous-like MADS-box protein AGL23">
    <location>
        <begin position="1"/>
        <end position="226"/>
    </location>
</feature>
<feature type="domain" description="MADS-box" evidence="2">
    <location>
        <begin position="6"/>
        <end position="66"/>
    </location>
</feature>
<feature type="region of interest" description="Disordered" evidence="3">
    <location>
        <begin position="108"/>
        <end position="131"/>
    </location>
</feature>
<feature type="coiled-coil region" evidence="1">
    <location>
        <begin position="95"/>
        <end position="132"/>
    </location>
</feature>
<feature type="compositionally biased region" description="Basic and acidic residues" evidence="3">
    <location>
        <begin position="108"/>
        <end position="127"/>
    </location>
</feature>